<organism>
    <name type="scientific">Klebsiella pneumoniae</name>
    <dbReference type="NCBI Taxonomy" id="573"/>
    <lineage>
        <taxon>Bacteria</taxon>
        <taxon>Pseudomonadati</taxon>
        <taxon>Pseudomonadota</taxon>
        <taxon>Gammaproteobacteria</taxon>
        <taxon>Enterobacterales</taxon>
        <taxon>Enterobacteriaceae</taxon>
        <taxon>Klebsiella/Raoultella group</taxon>
        <taxon>Klebsiella</taxon>
        <taxon>Klebsiella pneumoniae complex</taxon>
    </lineage>
</organism>
<accession>Q48475</accession>
<name>RFBA1_KLEPN</name>
<feature type="chain" id="PRO_0000182992" description="O-antigen export system permease protein RfbA">
    <location>
        <begin position="1"/>
        <end position="259"/>
    </location>
</feature>
<feature type="transmembrane region" description="Helical" evidence="1">
    <location>
        <begin position="33"/>
        <end position="53"/>
    </location>
</feature>
<feature type="transmembrane region" description="Helical" evidence="1">
    <location>
        <begin position="73"/>
        <end position="95"/>
    </location>
</feature>
<feature type="transmembrane region" description="Helical" evidence="1">
    <location>
        <begin position="111"/>
        <end position="131"/>
    </location>
</feature>
<feature type="transmembrane region" description="Helical" evidence="1">
    <location>
        <begin position="142"/>
        <end position="162"/>
    </location>
</feature>
<feature type="transmembrane region" description="Helical" evidence="1">
    <location>
        <begin position="176"/>
        <end position="196"/>
    </location>
</feature>
<feature type="transmembrane region" description="Helical" evidence="1">
    <location>
        <begin position="228"/>
        <end position="248"/>
    </location>
</feature>
<feature type="domain" description="ABC transmembrane type-2" evidence="2">
    <location>
        <begin position="33"/>
        <end position="251"/>
    </location>
</feature>
<reference key="1">
    <citation type="journal article" date="1994" name="Mol. Microbiol.">
        <title>Identification of an ATP-binding cassette transport system required for translocation of lipopolysaccharide O-antigen side-chains across the cytoplasmic membrane of Klebsiella pneumoniae serotype O1.</title>
        <authorList>
            <person name="Bronner D."/>
            <person name="Clarke B.R."/>
            <person name="Whitfield C."/>
        </authorList>
    </citation>
    <scope>NUCLEOTIDE SEQUENCE [GENOMIC DNA]</scope>
    <source>
        <strain>O1:K20 / 889/50</strain>
    </source>
</reference>
<keyword id="KW-0997">Cell inner membrane</keyword>
<keyword id="KW-1003">Cell membrane</keyword>
<keyword id="KW-0472">Membrane</keyword>
<keyword id="KW-0625">Polysaccharide transport</keyword>
<keyword id="KW-0762">Sugar transport</keyword>
<keyword id="KW-0812">Transmembrane</keyword>
<keyword id="KW-1133">Transmembrane helix</keyword>
<keyword id="KW-0813">Transport</keyword>
<gene>
    <name type="primary">rfbA</name>
</gene>
<dbReference type="EMBL" id="L31775">
    <property type="protein sequence ID" value="AAC98411.1"/>
    <property type="molecule type" value="Genomic_DNA"/>
</dbReference>
<dbReference type="PIR" id="S60882">
    <property type="entry name" value="S60882"/>
</dbReference>
<dbReference type="SMR" id="Q48475"/>
<dbReference type="TCDB" id="3.A.1.103.1">
    <property type="family name" value="the atp-binding cassette (abc) superfamily"/>
</dbReference>
<dbReference type="GO" id="GO:0005886">
    <property type="term" value="C:plasma membrane"/>
    <property type="evidence" value="ECO:0007669"/>
    <property type="project" value="UniProtKB-SubCell"/>
</dbReference>
<dbReference type="GO" id="GO:0140359">
    <property type="term" value="F:ABC-type transporter activity"/>
    <property type="evidence" value="ECO:0007669"/>
    <property type="project" value="InterPro"/>
</dbReference>
<dbReference type="GO" id="GO:0015920">
    <property type="term" value="P:lipopolysaccharide transport"/>
    <property type="evidence" value="ECO:0007669"/>
    <property type="project" value="TreeGrafter"/>
</dbReference>
<dbReference type="GO" id="GO:0015774">
    <property type="term" value="P:polysaccharide transport"/>
    <property type="evidence" value="ECO:0007669"/>
    <property type="project" value="UniProtKB-KW"/>
</dbReference>
<dbReference type="InterPro" id="IPR013525">
    <property type="entry name" value="ABC2_TM"/>
</dbReference>
<dbReference type="InterPro" id="IPR047817">
    <property type="entry name" value="ABC2_TM_bact-type"/>
</dbReference>
<dbReference type="PANTHER" id="PTHR30413">
    <property type="entry name" value="INNER MEMBRANE TRANSPORT PERMEASE"/>
    <property type="match status" value="1"/>
</dbReference>
<dbReference type="PANTHER" id="PTHR30413:SF8">
    <property type="entry name" value="TRANSPORT PERMEASE PROTEIN"/>
    <property type="match status" value="1"/>
</dbReference>
<dbReference type="Pfam" id="PF01061">
    <property type="entry name" value="ABC2_membrane"/>
    <property type="match status" value="1"/>
</dbReference>
<dbReference type="PROSITE" id="PS51012">
    <property type="entry name" value="ABC_TM2"/>
    <property type="match status" value="1"/>
</dbReference>
<protein>
    <recommendedName>
        <fullName>O-antigen export system permease protein RfbA</fullName>
    </recommendedName>
</protein>
<evidence type="ECO:0000255" key="1"/>
<evidence type="ECO:0000255" key="2">
    <source>
        <dbReference type="PROSITE-ProRule" id="PRU00442"/>
    </source>
</evidence>
<evidence type="ECO:0000305" key="3"/>
<comment type="function">
    <text>May form an ATP-driven O-antigen export apparatus, in association with RfbB.</text>
</comment>
<comment type="subcellular location">
    <subcellularLocation>
        <location evidence="3">Cell inner membrane</location>
        <topology evidence="3">Multi-pass membrane protein</topology>
    </subcellularLocation>
</comment>
<comment type="similarity">
    <text evidence="3">Belongs to the ABC-2 integral membrane protein family.</text>
</comment>
<proteinExistence type="inferred from homology"/>
<sequence>MSIKMKYNLGYLFDLLVVITNKDLKVRYKSSMLGYLWSVANPLLFAMIYYFIFKLVMRVQIPNYTVFLITGLFPWQWFASSATNSLFSFIANAQIIKKTVFPRSVIPLSNVMMEGLHFLCTIPVIVVFLFVYGMTPSLSWVWGIPLIAIGQVIFTFGVSIIFSTLNLFFRDLERFVSLGIMLMFYCTPILYASDMIPEKFSWIITYNPLASMILSWRDLFMNGTLNYEYISILYFTGIILTVVGLSIFNKLKYRFAEIL</sequence>